<reference key="1">
    <citation type="journal article" date="1982" name="Phytochemistry">
        <title>Amino acid sequence of ferredoxin from Arctium lappa.</title>
        <authorList>
            <person name="Takruri I.A.H."/>
            <person name="Gilroy J."/>
            <person name="Boulter D."/>
        </authorList>
    </citation>
    <scope>PROTEIN SEQUENCE</scope>
</reference>
<comment type="function">
    <text>Ferredoxins are iron-sulfur proteins that transfer electrons in a wide variety of metabolic reactions.</text>
</comment>
<comment type="cofactor">
    <cofactor>
        <name>[2Fe-2S] cluster</name>
        <dbReference type="ChEBI" id="CHEBI:190135"/>
    </cofactor>
    <text>Binds 1 [2Fe-2S] cluster.</text>
</comment>
<comment type="subcellular location">
    <subcellularLocation>
        <location>Plastid</location>
        <location>Chloroplast</location>
    </subcellularLocation>
</comment>
<comment type="similarity">
    <text evidence="2">Belongs to the 2Fe2S plant-type ferredoxin family.</text>
</comment>
<accession>P00223</accession>
<protein>
    <recommendedName>
        <fullName>Ferredoxin</fullName>
    </recommendedName>
</protein>
<dbReference type="PIR" id="A00230">
    <property type="entry name" value="FEBQ"/>
</dbReference>
<dbReference type="SMR" id="P00223"/>
<dbReference type="GO" id="GO:0009570">
    <property type="term" value="C:chloroplast stroma"/>
    <property type="evidence" value="ECO:0007669"/>
    <property type="project" value="TreeGrafter"/>
</dbReference>
<dbReference type="GO" id="GO:0051537">
    <property type="term" value="F:2 iron, 2 sulfur cluster binding"/>
    <property type="evidence" value="ECO:0007669"/>
    <property type="project" value="UniProtKB-KW"/>
</dbReference>
<dbReference type="GO" id="GO:0009055">
    <property type="term" value="F:electron transfer activity"/>
    <property type="evidence" value="ECO:0007669"/>
    <property type="project" value="InterPro"/>
</dbReference>
<dbReference type="GO" id="GO:0046872">
    <property type="term" value="F:metal ion binding"/>
    <property type="evidence" value="ECO:0007669"/>
    <property type="project" value="UniProtKB-KW"/>
</dbReference>
<dbReference type="GO" id="GO:0022900">
    <property type="term" value="P:electron transport chain"/>
    <property type="evidence" value="ECO:0007669"/>
    <property type="project" value="InterPro"/>
</dbReference>
<dbReference type="GO" id="GO:0006124">
    <property type="term" value="P:ferredoxin metabolic process"/>
    <property type="evidence" value="ECO:0007669"/>
    <property type="project" value="UniProtKB-ARBA"/>
</dbReference>
<dbReference type="CDD" id="cd00207">
    <property type="entry name" value="fer2"/>
    <property type="match status" value="1"/>
</dbReference>
<dbReference type="FunFam" id="3.10.20.30:FF:000014">
    <property type="entry name" value="Ferredoxin"/>
    <property type="match status" value="1"/>
</dbReference>
<dbReference type="Gene3D" id="3.10.20.30">
    <property type="match status" value="1"/>
</dbReference>
<dbReference type="InterPro" id="IPR036010">
    <property type="entry name" value="2Fe-2S_ferredoxin-like_sf"/>
</dbReference>
<dbReference type="InterPro" id="IPR001041">
    <property type="entry name" value="2Fe-2S_ferredoxin-type"/>
</dbReference>
<dbReference type="InterPro" id="IPR006058">
    <property type="entry name" value="2Fe2S_fd_BS"/>
</dbReference>
<dbReference type="InterPro" id="IPR012675">
    <property type="entry name" value="Beta-grasp_dom_sf"/>
</dbReference>
<dbReference type="InterPro" id="IPR010241">
    <property type="entry name" value="Fd_pln"/>
</dbReference>
<dbReference type="NCBIfam" id="TIGR02008">
    <property type="entry name" value="fdx_plant"/>
    <property type="match status" value="1"/>
</dbReference>
<dbReference type="PANTHER" id="PTHR43112">
    <property type="entry name" value="FERREDOXIN"/>
    <property type="match status" value="1"/>
</dbReference>
<dbReference type="PANTHER" id="PTHR43112:SF3">
    <property type="entry name" value="FERREDOXIN-2, CHLOROPLASTIC"/>
    <property type="match status" value="1"/>
</dbReference>
<dbReference type="Pfam" id="PF00111">
    <property type="entry name" value="Fer2"/>
    <property type="match status" value="1"/>
</dbReference>
<dbReference type="SUPFAM" id="SSF54292">
    <property type="entry name" value="2Fe-2S ferredoxin-like"/>
    <property type="match status" value="1"/>
</dbReference>
<dbReference type="PROSITE" id="PS00197">
    <property type="entry name" value="2FE2S_FER_1"/>
    <property type="match status" value="1"/>
</dbReference>
<dbReference type="PROSITE" id="PS51085">
    <property type="entry name" value="2FE2S_FER_2"/>
    <property type="match status" value="1"/>
</dbReference>
<organism>
    <name type="scientific">Arctium lappa</name>
    <name type="common">Greater burdock</name>
    <name type="synonym">Lappa major</name>
    <dbReference type="NCBI Taxonomy" id="4217"/>
    <lineage>
        <taxon>Eukaryota</taxon>
        <taxon>Viridiplantae</taxon>
        <taxon>Streptophyta</taxon>
        <taxon>Embryophyta</taxon>
        <taxon>Tracheophyta</taxon>
        <taxon>Spermatophyta</taxon>
        <taxon>Magnoliopsida</taxon>
        <taxon>eudicotyledons</taxon>
        <taxon>Gunneridae</taxon>
        <taxon>Pentapetalae</taxon>
        <taxon>asterids</taxon>
        <taxon>campanulids</taxon>
        <taxon>Asterales</taxon>
        <taxon>Asteraceae</taxon>
        <taxon>Carduoideae</taxon>
        <taxon>Cardueae</taxon>
        <taxon>Arctiinae</taxon>
        <taxon>Arctium</taxon>
    </lineage>
</organism>
<proteinExistence type="evidence at protein level"/>
<sequence length="97" mass="10425">ATYKVTLITPEGKQEFEVPDDVYILDHAAEEVGDLPYSCRAGSCSSCAGKVTAGSVDQSDGSYLDDDQMEAGWVLTCVAYPTSDVTIETHKEEELTA</sequence>
<evidence type="ECO:0000255" key="1">
    <source>
        <dbReference type="PROSITE-ProRule" id="PRU00465"/>
    </source>
</evidence>
<evidence type="ECO:0000305" key="2"/>
<name>FER_ARCLA</name>
<keyword id="KW-0001">2Fe-2S</keyword>
<keyword id="KW-0150">Chloroplast</keyword>
<keyword id="KW-0903">Direct protein sequencing</keyword>
<keyword id="KW-0249">Electron transport</keyword>
<keyword id="KW-0408">Iron</keyword>
<keyword id="KW-0411">Iron-sulfur</keyword>
<keyword id="KW-0479">Metal-binding</keyword>
<keyword id="KW-0934">Plastid</keyword>
<keyword id="KW-0813">Transport</keyword>
<feature type="chain" id="PRO_0000189308" description="Ferredoxin">
    <location>
        <begin position="1"/>
        <end position="97"/>
    </location>
</feature>
<feature type="domain" description="2Fe-2S ferredoxin-type" evidence="1">
    <location>
        <begin position="3"/>
        <end position="93"/>
    </location>
</feature>
<feature type="binding site" evidence="1">
    <location>
        <position position="39"/>
    </location>
    <ligand>
        <name>[2Fe-2S] cluster</name>
        <dbReference type="ChEBI" id="CHEBI:190135"/>
    </ligand>
</feature>
<feature type="binding site" evidence="1">
    <location>
        <position position="44"/>
    </location>
    <ligand>
        <name>[2Fe-2S] cluster</name>
        <dbReference type="ChEBI" id="CHEBI:190135"/>
    </ligand>
</feature>
<feature type="binding site" evidence="1">
    <location>
        <position position="47"/>
    </location>
    <ligand>
        <name>[2Fe-2S] cluster</name>
        <dbReference type="ChEBI" id="CHEBI:190135"/>
    </ligand>
</feature>
<feature type="binding site" evidence="1">
    <location>
        <position position="77"/>
    </location>
    <ligand>
        <name>[2Fe-2S] cluster</name>
        <dbReference type="ChEBI" id="CHEBI:190135"/>
    </ligand>
</feature>
<feature type="sequence variant">
    <original>Y</original>
    <variation>F</variation>
    <location>
        <position position="63"/>
    </location>
</feature>